<evidence type="ECO:0000269" key="1">
    <source>
    </source>
</evidence>
<evidence type="ECO:0000303" key="2">
    <source>
    </source>
</evidence>
<evidence type="ECO:0000305" key="3">
    <source>
    </source>
</evidence>
<name>PLD_POLDI</name>
<organism>
    <name type="scientific">Polybia dimorpha</name>
    <name type="common">Neotropical wasp</name>
    <dbReference type="NCBI Taxonomy" id="2893826"/>
    <lineage>
        <taxon>Eukaryota</taxon>
        <taxon>Metazoa</taxon>
        <taxon>Ecdysozoa</taxon>
        <taxon>Arthropoda</taxon>
        <taxon>Hexapoda</taxon>
        <taxon>Insecta</taxon>
        <taxon>Pterygota</taxon>
        <taxon>Neoptera</taxon>
        <taxon>Endopterygota</taxon>
        <taxon>Hymenoptera</taxon>
        <taxon>Apocrita</taxon>
        <taxon>Aculeata</taxon>
        <taxon>Vespoidea</taxon>
        <taxon>Vespidae</taxon>
        <taxon>Polistinae</taxon>
        <taxon>Epiponini</taxon>
        <taxon>Polybia</taxon>
    </lineage>
</organism>
<reference key="1">
    <citation type="journal article" date="2016" name="PLoS ONE">
        <title>Antimycobacterial activity of a new peptide polydim-I isolated from neotropical social wasp Polybia dimorpha.</title>
        <authorList>
            <person name="das Neves R.C."/>
            <person name="Trentini M.M."/>
            <person name="de Castro e Silva J."/>
            <person name="Simon K.S."/>
            <person name="Bocca A.L."/>
            <person name="Silva L.P."/>
            <person name="Mortari M.R."/>
            <person name="Kipnis A."/>
            <person name="Junqueira-Kipnis A.P."/>
        </authorList>
    </citation>
    <scope>PROTEIN SEQUENCE</scope>
    <scope>MASS SPECTROMETRY</scope>
    <scope>SYNTHESIS</scope>
    <scope>FUNCTION</scope>
    <scope>SUBCELLULAR LOCATION</scope>
    <source>
        <tissue>Venom</tissue>
    </source>
</reference>
<keyword id="KW-0044">Antibiotic</keyword>
<keyword id="KW-0929">Antimicrobial</keyword>
<keyword id="KW-0903">Direct protein sequencing</keyword>
<keyword id="KW-0391">Immunity</keyword>
<keyword id="KW-0399">Innate immunity</keyword>
<keyword id="KW-0964">Secreted</keyword>
<accession>P0DV63</accession>
<comment type="function">
    <text evidence="1">Antibacterial peptide. Acts on the Mycobacterium abscessus subsp. massiliense cell wall. Reduces 40-50% of the bacterial load in macrophages infected with different M.abscessus strains. Is not cytotoxic towards mammalian cells, and shows no hemolytic activity against human erythrocytes. In vivo, reduces the bacterial load in the lungs, spleen, and liver of highly susceptible mice intravenously infected with M.abscessus.</text>
</comment>
<comment type="subcellular location">
    <subcellularLocation>
        <location evidence="1">Secreted</location>
    </subcellularLocation>
</comment>
<comment type="tissue specificity">
    <text evidence="3">Expressed by the venom gland.</text>
</comment>
<comment type="mass spectrometry" mass="2441.7" method="MALDI" evidence="1"/>
<feature type="peptide" id="PRO_0000455165" description="Polydim-I" evidence="1">
    <location>
        <begin position="1"/>
        <end position="22"/>
    </location>
</feature>
<protein>
    <recommendedName>
        <fullName evidence="2">Polydim-I</fullName>
    </recommendedName>
</protein>
<dbReference type="GO" id="GO:0005576">
    <property type="term" value="C:extracellular region"/>
    <property type="evidence" value="ECO:0007669"/>
    <property type="project" value="UniProtKB-SubCell"/>
</dbReference>
<dbReference type="GO" id="GO:0042742">
    <property type="term" value="P:defense response to bacterium"/>
    <property type="evidence" value="ECO:0007669"/>
    <property type="project" value="UniProtKB-KW"/>
</dbReference>
<dbReference type="GO" id="GO:0045087">
    <property type="term" value="P:innate immune response"/>
    <property type="evidence" value="ECO:0007669"/>
    <property type="project" value="UniProtKB-KW"/>
</dbReference>
<sequence length="22" mass="2442">AVAGEKLWLLPHLLKMLLTPTP</sequence>
<proteinExistence type="evidence at protein level"/>